<keyword id="KW-1185">Reference proteome</keyword>
<dbReference type="EMBL" id="U05345">
    <property type="status" value="NOT_ANNOTATED_CDS"/>
    <property type="molecule type" value="Unassigned_DNA"/>
</dbReference>
<dbReference type="EMBL" id="AJ222587">
    <property type="protein sequence ID" value="CAA10865.1"/>
    <property type="molecule type" value="Genomic_DNA"/>
</dbReference>
<dbReference type="EMBL" id="AL009126">
    <property type="protein sequence ID" value="CAB13275.1"/>
    <property type="molecule type" value="Genomic_DNA"/>
</dbReference>
<dbReference type="EMBL" id="Z29584">
    <property type="status" value="NOT_ANNOTATED_CDS"/>
    <property type="molecule type" value="Genomic_DNA"/>
</dbReference>
<dbReference type="EMBL" id="X68235">
    <property type="status" value="NOT_ANNOTATED_CDS"/>
    <property type="molecule type" value="Genomic_DNA"/>
</dbReference>
<dbReference type="PIR" id="E69870">
    <property type="entry name" value="E69870"/>
</dbReference>
<dbReference type="RefSeq" id="WP_003232406.1">
    <property type="nucleotide sequence ID" value="NZ_OZ025638.1"/>
</dbReference>
<dbReference type="STRING" id="224308.BSU14020"/>
<dbReference type="PaxDb" id="224308-BSU14020"/>
<dbReference type="EnsemblBacteria" id="CAB13275">
    <property type="protein sequence ID" value="CAB13275"/>
    <property type="gene ID" value="BSU_14020"/>
</dbReference>
<dbReference type="GeneID" id="939225"/>
<dbReference type="KEGG" id="bsu:BSU14020"/>
<dbReference type="PATRIC" id="fig|224308.179.peg.1529"/>
<dbReference type="eggNOG" id="ENOG50310Y3">
    <property type="taxonomic scope" value="Bacteria"/>
</dbReference>
<dbReference type="InParanoid" id="P42430"/>
<dbReference type="OrthoDB" id="2360869at2"/>
<dbReference type="BioCyc" id="BSUB:BSU14020-MONOMER"/>
<dbReference type="PRO" id="PR:P42430"/>
<dbReference type="Proteomes" id="UP000001570">
    <property type="component" value="Chromosome"/>
</dbReference>
<dbReference type="InterPro" id="IPR025552">
    <property type="entry name" value="YkyB"/>
</dbReference>
<dbReference type="Pfam" id="PF14177">
    <property type="entry name" value="YkyB"/>
    <property type="match status" value="1"/>
</dbReference>
<accession>P42430</accession>
<accession>O34548</accession>
<proteinExistence type="predicted"/>
<comment type="sequence caution" evidence="1">
    <conflict type="frameshift">
        <sequence resource="EMBL" id="U05345"/>
    </conflict>
</comment>
<reference key="1">
    <citation type="journal article" date="1994" name="J. Bacteriol.">
        <title>Dual chemotaxis signaling pathways in Bacillus subtilis: a sigma D-dependent gene encodes a novel protein with both CheW and CheY homologous domains.</title>
        <authorList>
            <person name="Fredrick K.L."/>
            <person name="Helmann J.D."/>
        </authorList>
    </citation>
    <scope>NUCLEOTIDE SEQUENCE [GENOMIC DNA]</scope>
    <source>
        <strain>168</strain>
    </source>
</reference>
<reference key="2">
    <citation type="submission" date="1997-11" db="EMBL/GenBank/DDBJ databases">
        <authorList>
            <person name="Scanlan E."/>
            <person name="Devine K.M."/>
        </authorList>
    </citation>
    <scope>NUCLEOTIDE SEQUENCE [GENOMIC DNA]</scope>
    <source>
        <strain>168</strain>
    </source>
</reference>
<reference key="3">
    <citation type="journal article" date="1997" name="Nature">
        <title>The complete genome sequence of the Gram-positive bacterium Bacillus subtilis.</title>
        <authorList>
            <person name="Kunst F."/>
            <person name="Ogasawara N."/>
            <person name="Moszer I."/>
            <person name="Albertini A.M."/>
            <person name="Alloni G."/>
            <person name="Azevedo V."/>
            <person name="Bertero M.G."/>
            <person name="Bessieres P."/>
            <person name="Bolotin A."/>
            <person name="Borchert S."/>
            <person name="Borriss R."/>
            <person name="Boursier L."/>
            <person name="Brans A."/>
            <person name="Braun M."/>
            <person name="Brignell S.C."/>
            <person name="Bron S."/>
            <person name="Brouillet S."/>
            <person name="Bruschi C.V."/>
            <person name="Caldwell B."/>
            <person name="Capuano V."/>
            <person name="Carter N.M."/>
            <person name="Choi S.-K."/>
            <person name="Codani J.-J."/>
            <person name="Connerton I.F."/>
            <person name="Cummings N.J."/>
            <person name="Daniel R.A."/>
            <person name="Denizot F."/>
            <person name="Devine K.M."/>
            <person name="Duesterhoeft A."/>
            <person name="Ehrlich S.D."/>
            <person name="Emmerson P.T."/>
            <person name="Entian K.-D."/>
            <person name="Errington J."/>
            <person name="Fabret C."/>
            <person name="Ferrari E."/>
            <person name="Foulger D."/>
            <person name="Fritz C."/>
            <person name="Fujita M."/>
            <person name="Fujita Y."/>
            <person name="Fuma S."/>
            <person name="Galizzi A."/>
            <person name="Galleron N."/>
            <person name="Ghim S.-Y."/>
            <person name="Glaser P."/>
            <person name="Goffeau A."/>
            <person name="Golightly E.J."/>
            <person name="Grandi G."/>
            <person name="Guiseppi G."/>
            <person name="Guy B.J."/>
            <person name="Haga K."/>
            <person name="Haiech J."/>
            <person name="Harwood C.R."/>
            <person name="Henaut A."/>
            <person name="Hilbert H."/>
            <person name="Holsappel S."/>
            <person name="Hosono S."/>
            <person name="Hullo M.-F."/>
            <person name="Itaya M."/>
            <person name="Jones L.-M."/>
            <person name="Joris B."/>
            <person name="Karamata D."/>
            <person name="Kasahara Y."/>
            <person name="Klaerr-Blanchard M."/>
            <person name="Klein C."/>
            <person name="Kobayashi Y."/>
            <person name="Koetter P."/>
            <person name="Koningstein G."/>
            <person name="Krogh S."/>
            <person name="Kumano M."/>
            <person name="Kurita K."/>
            <person name="Lapidus A."/>
            <person name="Lardinois S."/>
            <person name="Lauber J."/>
            <person name="Lazarevic V."/>
            <person name="Lee S.-M."/>
            <person name="Levine A."/>
            <person name="Liu H."/>
            <person name="Masuda S."/>
            <person name="Mauel C."/>
            <person name="Medigue C."/>
            <person name="Medina N."/>
            <person name="Mellado R.P."/>
            <person name="Mizuno M."/>
            <person name="Moestl D."/>
            <person name="Nakai S."/>
            <person name="Noback M."/>
            <person name="Noone D."/>
            <person name="O'Reilly M."/>
            <person name="Ogawa K."/>
            <person name="Ogiwara A."/>
            <person name="Oudega B."/>
            <person name="Park S.-H."/>
            <person name="Parro V."/>
            <person name="Pohl T.M."/>
            <person name="Portetelle D."/>
            <person name="Porwollik S."/>
            <person name="Prescott A.M."/>
            <person name="Presecan E."/>
            <person name="Pujic P."/>
            <person name="Purnelle B."/>
            <person name="Rapoport G."/>
            <person name="Rey M."/>
            <person name="Reynolds S."/>
            <person name="Rieger M."/>
            <person name="Rivolta C."/>
            <person name="Rocha E."/>
            <person name="Roche B."/>
            <person name="Rose M."/>
            <person name="Sadaie Y."/>
            <person name="Sato T."/>
            <person name="Scanlan E."/>
            <person name="Schleich S."/>
            <person name="Schroeter R."/>
            <person name="Scoffone F."/>
            <person name="Sekiguchi J."/>
            <person name="Sekowska A."/>
            <person name="Seror S.J."/>
            <person name="Serror P."/>
            <person name="Shin B.-S."/>
            <person name="Soldo B."/>
            <person name="Sorokin A."/>
            <person name="Tacconi E."/>
            <person name="Takagi T."/>
            <person name="Takahashi H."/>
            <person name="Takemaru K."/>
            <person name="Takeuchi M."/>
            <person name="Tamakoshi A."/>
            <person name="Tanaka T."/>
            <person name="Terpstra P."/>
            <person name="Tognoni A."/>
            <person name="Tosato V."/>
            <person name="Uchiyama S."/>
            <person name="Vandenbol M."/>
            <person name="Vannier F."/>
            <person name="Vassarotti A."/>
            <person name="Viari A."/>
            <person name="Wambutt R."/>
            <person name="Wedler E."/>
            <person name="Wedler H."/>
            <person name="Weitzenegger T."/>
            <person name="Winters P."/>
            <person name="Wipat A."/>
            <person name="Yamamoto H."/>
            <person name="Yamane K."/>
            <person name="Yasumoto K."/>
            <person name="Yata K."/>
            <person name="Yoshida K."/>
            <person name="Yoshikawa H.-F."/>
            <person name="Zumstein E."/>
            <person name="Yoshikawa H."/>
            <person name="Danchin A."/>
        </authorList>
    </citation>
    <scope>NUCLEOTIDE SEQUENCE [LARGE SCALE GENOMIC DNA]</scope>
    <source>
        <strain>168</strain>
    </source>
</reference>
<reference key="4">
    <citation type="journal article" date="1993" name="FEMS Microbiol. Lett.">
        <title>Cloning and characterization of heat-inducible promoters of Bacillus subtilis.</title>
        <authorList>
            <person name="Voelker U."/>
            <person name="Riethdorf S."/>
            <person name="Winkler A."/>
            <person name="Weigend B."/>
            <person name="Fortnagel P."/>
            <person name="Hecker M."/>
        </authorList>
    </citation>
    <scope>NUCLEOTIDE SEQUENCE [GENOMIC DNA] OF 1-9</scope>
    <source>
        <strain>168</strain>
    </source>
</reference>
<gene>
    <name type="primary">ykyB</name>
    <name type="ordered locus">BSU14020</name>
</gene>
<sequence>MDDHAYTKDLQPTVENLSKAVYTVNRHAKTAPNPKYLYLLKKRALQKLVKEGKGKKIGLHFSKNPRFSQQQSDVLISIGDYYFHMPPTKEDFEHLPHLGTLNQSYRNPKAQMSLTKAKHLLQEYVGMKEKPLVPNRQQPAYHKPVFKKLGESYF</sequence>
<evidence type="ECO:0000305" key="1"/>
<feature type="chain" id="PRO_0000049613" description="Uncharacterized protein YkyB">
    <location>
        <begin position="1"/>
        <end position="154"/>
    </location>
</feature>
<protein>
    <recommendedName>
        <fullName>Uncharacterized protein YkyB</fullName>
    </recommendedName>
</protein>
<name>YKYB_BACSU</name>
<organism>
    <name type="scientific">Bacillus subtilis (strain 168)</name>
    <dbReference type="NCBI Taxonomy" id="224308"/>
    <lineage>
        <taxon>Bacteria</taxon>
        <taxon>Bacillati</taxon>
        <taxon>Bacillota</taxon>
        <taxon>Bacilli</taxon>
        <taxon>Bacillales</taxon>
        <taxon>Bacillaceae</taxon>
        <taxon>Bacillus</taxon>
    </lineage>
</organism>